<proteinExistence type="evidence at protein level"/>
<name>LPMG_SALT1</name>
<sequence>MDPEPTPLPRWRIFLFR</sequence>
<accession>P0CI69</accession>
<evidence type="ECO:0000269" key="1">
    <source>
    </source>
</evidence>
<evidence type="ECO:0000305" key="2"/>
<keyword id="KW-0428">Leader peptide</keyword>
<feature type="chain" id="PRO_0000403460" description="mgtA leader peptide">
    <location>
        <begin position="1"/>
        <end position="17"/>
    </location>
</feature>
<feature type="mutagenesis site" description="Increases mgtA transcription. Loss of response to osmotic shock.">
    <original>PEPTPLP</original>
    <variation>LETTHLL</variation>
    <location>
        <begin position="3"/>
        <end position="9"/>
    </location>
</feature>
<feature type="mutagenesis site" description="No change in downstream mgtA transcription under limiting proline levels." evidence="1">
    <original>P</original>
    <variation>L</variation>
    <location>
        <position position="3"/>
    </location>
</feature>
<feature type="mutagenesis site" description="Significantly increases transcription of mgtA.">
    <location>
        <begin position="4"/>
        <end position="17"/>
    </location>
</feature>
<feature type="mutagenesis site" description="Increases mgtA transcription." evidence="1">
    <original>PTPLP</original>
    <variation>TTHLL</variation>
    <location>
        <begin position="5"/>
        <end position="9"/>
    </location>
</feature>
<feature type="mutagenesis site" description="Increases transcription of mgtA." evidence="1">
    <location>
        <begin position="7"/>
        <end position="17"/>
    </location>
</feature>
<feature type="mutagenesis site" description="Increases transcription of mgtA." evidence="1">
    <location>
        <begin position="10"/>
        <end position="17"/>
    </location>
</feature>
<feature type="mutagenesis site" description="Moderately increases transcription of mgtA." evidence="1">
    <location>
        <begin position="13"/>
        <end position="17"/>
    </location>
</feature>
<feature type="mutagenesis site" description="No effect on transcription of mgtA." evidence="1">
    <location>
        <begin position="14"/>
        <end position="17"/>
    </location>
</feature>
<gene>
    <name type="primary">mgtL</name>
    <name type="ordered locus">STM14_5348.1</name>
</gene>
<comment type="function">
    <text evidence="1">Makes mgtA transcription sensitive to intracellular proline levels. At low levels of proline this proline-rich protein cannot be fully translated, and stem loop 'C' forms in the mgtA 5' UTR which permits transcription of the downstream mgtA gene. Osmotic shock induction (0.3 M NaCl) also depends on mgtL translation. The distance between the mtgL-translating ribosome and the nucleotides which form the downstream stem loop 'C' is critical for mgtL-mediated transcription of mgtA. Cotranscribed with mgtA.</text>
</comment>
<comment type="similarity">
    <text evidence="2">Belongs to the MgtL family.</text>
</comment>
<organism>
    <name type="scientific">Salmonella typhimurium (strain 14028s / SGSC 2262)</name>
    <dbReference type="NCBI Taxonomy" id="588858"/>
    <lineage>
        <taxon>Bacteria</taxon>
        <taxon>Pseudomonadati</taxon>
        <taxon>Pseudomonadota</taxon>
        <taxon>Gammaproteobacteria</taxon>
        <taxon>Enterobacterales</taxon>
        <taxon>Enterobacteriaceae</taxon>
        <taxon>Salmonella</taxon>
    </lineage>
</organism>
<dbReference type="EMBL" id="CP001363">
    <property type="status" value="NOT_ANNOTATED_CDS"/>
    <property type="molecule type" value="Genomic_DNA"/>
</dbReference>
<dbReference type="Proteomes" id="UP000002695">
    <property type="component" value="Chromosome"/>
</dbReference>
<dbReference type="InterPro" id="IPR031434">
    <property type="entry name" value="MGTL"/>
</dbReference>
<dbReference type="Pfam" id="PF17059">
    <property type="entry name" value="MGTL"/>
    <property type="match status" value="1"/>
</dbReference>
<reference key="1">
    <citation type="journal article" date="2010" name="J. Bacteriol.">
        <title>Short-term signatures of evolutionary change in the Salmonella enterica serovar typhimurium 14028 genome.</title>
        <authorList>
            <person name="Jarvik T."/>
            <person name="Smillie C."/>
            <person name="Groisman E.A."/>
            <person name="Ochman H."/>
        </authorList>
    </citation>
    <scope>NUCLEOTIDE SEQUENCE [LARGE SCALE GENOMIC DNA]</scope>
    <source>
        <strain>14028s / SGSC 2262</strain>
    </source>
</reference>
<reference key="2">
    <citation type="journal article" date="2010" name="Cell">
        <title>A bacterial mRNA leader that employs different mechanisms to sense disparate intracellular signals.</title>
        <authorList>
            <person name="Park S.Y."/>
            <person name="Cromie M.J."/>
            <person name="Lee E.J."/>
            <person name="Groisman E.A."/>
        </authorList>
    </citation>
    <scope>FUNCTION IN TRANSCRIPTION OF MGTA</scope>
    <scope>MUTAGENESIS OF PRO-3; 5-PRO--PRO-9; 7-PRO--ARG-17; 10-ARG--ARG-17; 13-ILE--ARG-17 AND 14-PHE--ARG-17</scope>
</reference>
<protein>
    <recommendedName>
        <fullName>mgtA leader peptide</fullName>
    </recommendedName>
    <alternativeName>
        <fullName>Regulatory leader peptide for mgtA</fullName>
    </alternativeName>
</protein>